<accession>A0RNM0</accession>
<name>DAPE_CAMFF</name>
<feature type="chain" id="PRO_0000375518" description="Succinyl-diaminopimelate desuccinylase">
    <location>
        <begin position="1"/>
        <end position="365"/>
    </location>
</feature>
<feature type="active site" evidence="1">
    <location>
        <position position="66"/>
    </location>
</feature>
<feature type="active site" description="Proton acceptor" evidence="1">
    <location>
        <position position="125"/>
    </location>
</feature>
<feature type="binding site" evidence="1">
    <location>
        <position position="64"/>
    </location>
    <ligand>
        <name>Zn(2+)</name>
        <dbReference type="ChEBI" id="CHEBI:29105"/>
        <label>1</label>
    </ligand>
</feature>
<feature type="binding site" evidence="1">
    <location>
        <position position="95"/>
    </location>
    <ligand>
        <name>Zn(2+)</name>
        <dbReference type="ChEBI" id="CHEBI:29105"/>
        <label>1</label>
    </ligand>
</feature>
<feature type="binding site" evidence="1">
    <location>
        <position position="95"/>
    </location>
    <ligand>
        <name>Zn(2+)</name>
        <dbReference type="ChEBI" id="CHEBI:29105"/>
        <label>2</label>
    </ligand>
</feature>
<feature type="binding site" evidence="1">
    <location>
        <position position="126"/>
    </location>
    <ligand>
        <name>Zn(2+)</name>
        <dbReference type="ChEBI" id="CHEBI:29105"/>
        <label>2</label>
    </ligand>
</feature>
<feature type="binding site" evidence="1">
    <location>
        <position position="154"/>
    </location>
    <ligand>
        <name>Zn(2+)</name>
        <dbReference type="ChEBI" id="CHEBI:29105"/>
        <label>1</label>
    </ligand>
</feature>
<feature type="binding site" evidence="1">
    <location>
        <position position="339"/>
    </location>
    <ligand>
        <name>Zn(2+)</name>
        <dbReference type="ChEBI" id="CHEBI:29105"/>
        <label>2</label>
    </ligand>
</feature>
<keyword id="KW-0028">Amino-acid biosynthesis</keyword>
<keyword id="KW-0170">Cobalt</keyword>
<keyword id="KW-0220">Diaminopimelate biosynthesis</keyword>
<keyword id="KW-0378">Hydrolase</keyword>
<keyword id="KW-0457">Lysine biosynthesis</keyword>
<keyword id="KW-0479">Metal-binding</keyword>
<keyword id="KW-0862">Zinc</keyword>
<gene>
    <name evidence="1" type="primary">dapE</name>
    <name type="ordered locus">CFF8240_0627</name>
</gene>
<dbReference type="EC" id="3.5.1.18" evidence="1"/>
<dbReference type="EMBL" id="CP000487">
    <property type="protein sequence ID" value="ABK82094.1"/>
    <property type="molecule type" value="Genomic_DNA"/>
</dbReference>
<dbReference type="RefSeq" id="WP_002849032.1">
    <property type="nucleotide sequence ID" value="NC_008599.1"/>
</dbReference>
<dbReference type="SMR" id="A0RNM0"/>
<dbReference type="GeneID" id="61064472"/>
<dbReference type="KEGG" id="cff:CFF8240_0627"/>
<dbReference type="eggNOG" id="COG0624">
    <property type="taxonomic scope" value="Bacteria"/>
</dbReference>
<dbReference type="HOGENOM" id="CLU_021802_2_3_7"/>
<dbReference type="UniPathway" id="UPA00034">
    <property type="reaction ID" value="UER00021"/>
</dbReference>
<dbReference type="Proteomes" id="UP000000760">
    <property type="component" value="Chromosome"/>
</dbReference>
<dbReference type="GO" id="GO:0008777">
    <property type="term" value="F:acetylornithine deacetylase activity"/>
    <property type="evidence" value="ECO:0007669"/>
    <property type="project" value="TreeGrafter"/>
</dbReference>
<dbReference type="GO" id="GO:0046872">
    <property type="term" value="F:metal ion binding"/>
    <property type="evidence" value="ECO:0007669"/>
    <property type="project" value="UniProtKB-KW"/>
</dbReference>
<dbReference type="GO" id="GO:0009014">
    <property type="term" value="F:succinyl-diaminopimelate desuccinylase activity"/>
    <property type="evidence" value="ECO:0007669"/>
    <property type="project" value="UniProtKB-EC"/>
</dbReference>
<dbReference type="GO" id="GO:0019877">
    <property type="term" value="P:diaminopimelate biosynthetic process"/>
    <property type="evidence" value="ECO:0007669"/>
    <property type="project" value="UniProtKB-KW"/>
</dbReference>
<dbReference type="GO" id="GO:0006526">
    <property type="term" value="P:L-arginine biosynthetic process"/>
    <property type="evidence" value="ECO:0007669"/>
    <property type="project" value="TreeGrafter"/>
</dbReference>
<dbReference type="GO" id="GO:0009089">
    <property type="term" value="P:lysine biosynthetic process via diaminopimelate"/>
    <property type="evidence" value="ECO:0007669"/>
    <property type="project" value="UniProtKB-UniPathway"/>
</dbReference>
<dbReference type="CDD" id="cd03891">
    <property type="entry name" value="M20_DapE_proteobac"/>
    <property type="match status" value="1"/>
</dbReference>
<dbReference type="Gene3D" id="3.30.70.360">
    <property type="match status" value="1"/>
</dbReference>
<dbReference type="Gene3D" id="3.40.630.10">
    <property type="entry name" value="Zn peptidases"/>
    <property type="match status" value="2"/>
</dbReference>
<dbReference type="HAMAP" id="MF_01690">
    <property type="entry name" value="DapE"/>
    <property type="match status" value="1"/>
</dbReference>
<dbReference type="InterPro" id="IPR001261">
    <property type="entry name" value="ArgE/DapE_CS"/>
</dbReference>
<dbReference type="InterPro" id="IPR036264">
    <property type="entry name" value="Bact_exopeptidase_dim_dom"/>
</dbReference>
<dbReference type="InterPro" id="IPR005941">
    <property type="entry name" value="DapE_proteobac"/>
</dbReference>
<dbReference type="InterPro" id="IPR002933">
    <property type="entry name" value="Peptidase_M20"/>
</dbReference>
<dbReference type="InterPro" id="IPR011650">
    <property type="entry name" value="Peptidase_M20_dimer"/>
</dbReference>
<dbReference type="InterPro" id="IPR050072">
    <property type="entry name" value="Peptidase_M20A"/>
</dbReference>
<dbReference type="NCBIfam" id="TIGR01246">
    <property type="entry name" value="dapE_proteo"/>
    <property type="match status" value="1"/>
</dbReference>
<dbReference type="NCBIfam" id="NF009557">
    <property type="entry name" value="PRK13009.1"/>
    <property type="match status" value="1"/>
</dbReference>
<dbReference type="PANTHER" id="PTHR43808">
    <property type="entry name" value="ACETYLORNITHINE DEACETYLASE"/>
    <property type="match status" value="1"/>
</dbReference>
<dbReference type="PANTHER" id="PTHR43808:SF31">
    <property type="entry name" value="N-ACETYL-L-CITRULLINE DEACETYLASE"/>
    <property type="match status" value="1"/>
</dbReference>
<dbReference type="Pfam" id="PF07687">
    <property type="entry name" value="M20_dimer"/>
    <property type="match status" value="1"/>
</dbReference>
<dbReference type="Pfam" id="PF01546">
    <property type="entry name" value="Peptidase_M20"/>
    <property type="match status" value="1"/>
</dbReference>
<dbReference type="SUPFAM" id="SSF55031">
    <property type="entry name" value="Bacterial exopeptidase dimerisation domain"/>
    <property type="match status" value="1"/>
</dbReference>
<dbReference type="SUPFAM" id="SSF53187">
    <property type="entry name" value="Zn-dependent exopeptidases"/>
    <property type="match status" value="1"/>
</dbReference>
<dbReference type="PROSITE" id="PS00759">
    <property type="entry name" value="ARGE_DAPE_CPG2_2"/>
    <property type="match status" value="1"/>
</dbReference>
<comment type="function">
    <text evidence="1">Catalyzes the hydrolysis of N-succinyl-L,L-diaminopimelic acid (SDAP), forming succinate and LL-2,6-diaminopimelate (DAP), an intermediate involved in the bacterial biosynthesis of lysine and meso-diaminopimelic acid, an essential component of bacterial cell walls.</text>
</comment>
<comment type="catalytic activity">
    <reaction evidence="1">
        <text>N-succinyl-(2S,6S)-2,6-diaminopimelate + H2O = (2S,6S)-2,6-diaminopimelate + succinate</text>
        <dbReference type="Rhea" id="RHEA:22608"/>
        <dbReference type="ChEBI" id="CHEBI:15377"/>
        <dbReference type="ChEBI" id="CHEBI:30031"/>
        <dbReference type="ChEBI" id="CHEBI:57609"/>
        <dbReference type="ChEBI" id="CHEBI:58087"/>
        <dbReference type="EC" id="3.5.1.18"/>
    </reaction>
</comment>
<comment type="cofactor">
    <cofactor evidence="1">
        <name>Zn(2+)</name>
        <dbReference type="ChEBI" id="CHEBI:29105"/>
    </cofactor>
    <cofactor evidence="1">
        <name>Co(2+)</name>
        <dbReference type="ChEBI" id="CHEBI:48828"/>
    </cofactor>
    <text evidence="1">Binds 2 Zn(2+) or Co(2+) ions per subunit.</text>
</comment>
<comment type="pathway">
    <text evidence="1">Amino-acid biosynthesis; L-lysine biosynthesis via DAP pathway; LL-2,6-diaminopimelate from (S)-tetrahydrodipicolinate (succinylase route): step 3/3.</text>
</comment>
<comment type="subunit">
    <text evidence="1">Homodimer.</text>
</comment>
<comment type="similarity">
    <text evidence="1">Belongs to the peptidase M20A family. DapE subfamily.</text>
</comment>
<protein>
    <recommendedName>
        <fullName evidence="1">Succinyl-diaminopimelate desuccinylase</fullName>
        <shortName evidence="1">SDAP desuccinylase</shortName>
        <ecNumber evidence="1">3.5.1.18</ecNumber>
    </recommendedName>
    <alternativeName>
        <fullName evidence="1">N-succinyl-LL-2,6-diaminoheptanedioate amidohydrolase</fullName>
    </alternativeName>
</protein>
<proteinExistence type="inferred from homology"/>
<reference key="1">
    <citation type="submission" date="2006-11" db="EMBL/GenBank/DDBJ databases">
        <title>Sequence of Campylobacter fetus subsp. fetus 82-40.</title>
        <authorList>
            <person name="Fouts D.E."/>
            <person name="Nelson K.E."/>
        </authorList>
    </citation>
    <scope>NUCLEOTIDE SEQUENCE [LARGE SCALE GENOMIC DNA]</scope>
    <source>
        <strain>82-40</strain>
    </source>
</reference>
<organism>
    <name type="scientific">Campylobacter fetus subsp. fetus (strain 82-40)</name>
    <dbReference type="NCBI Taxonomy" id="360106"/>
    <lineage>
        <taxon>Bacteria</taxon>
        <taxon>Pseudomonadati</taxon>
        <taxon>Campylobacterota</taxon>
        <taxon>Epsilonproteobacteria</taxon>
        <taxon>Campylobacterales</taxon>
        <taxon>Campylobacteraceae</taxon>
        <taxon>Campylobacter</taxon>
    </lineage>
</organism>
<sequence>MEVVEILKELLKFKSITPDDDGAMNFINMFMDGFDADFVDVNGIKNLILTKKFGDGVHLCFAGHIDVVPAGDGWDSDPFEPELKDGFVYARGAQDMKSGVAAFLCACKDATKFNGTLSIILTSDEEGDGIYGTLEALKFLKSRGNLPDFALVAEPTSSSTFGDTIKIGRRGSVNGVVTINGVQGHAAYPEKCVNPVHQLASVFSDFAGYELDSGSKYFGASKIVITDIRGGMEVVNVTPKSVKIMFNVRNSELTSCEDIKRYTEHIFNGFDFTLSLKESSKPFLTDESSKIVIQAQKSIENICKISPDLSTSGGTSDARYFAAFGVPVVEFGVVNDRIHAINERVLQSEVESLYLVFKDLIENFE</sequence>
<evidence type="ECO:0000255" key="1">
    <source>
        <dbReference type="HAMAP-Rule" id="MF_01690"/>
    </source>
</evidence>